<keyword id="KW-0687">Ribonucleoprotein</keyword>
<keyword id="KW-0689">Ribosomal protein</keyword>
<feature type="chain" id="PRO_1000087188" description="Large ribosomal subunit protein bL17">
    <location>
        <begin position="1"/>
        <end position="136"/>
    </location>
</feature>
<gene>
    <name evidence="1" type="primary">rplQ</name>
    <name type="ordered locus">RrIowa_1172</name>
</gene>
<comment type="subunit">
    <text evidence="1">Part of the 50S ribosomal subunit. Contacts protein L32.</text>
</comment>
<comment type="similarity">
    <text evidence="1">Belongs to the bacterial ribosomal protein bL17 family.</text>
</comment>
<accession>B0BUN5</accession>
<dbReference type="EMBL" id="CP000766">
    <property type="protein sequence ID" value="ABY72945.1"/>
    <property type="molecule type" value="Genomic_DNA"/>
</dbReference>
<dbReference type="RefSeq" id="WP_004997844.1">
    <property type="nucleotide sequence ID" value="NC_010263.3"/>
</dbReference>
<dbReference type="SMR" id="B0BUN5"/>
<dbReference type="GeneID" id="95361461"/>
<dbReference type="KEGG" id="rrj:RrIowa_1172"/>
<dbReference type="eggNOG" id="COG0203">
    <property type="taxonomic scope" value="Bacteria"/>
</dbReference>
<dbReference type="HOGENOM" id="CLU_074407_2_0_5"/>
<dbReference type="Proteomes" id="UP000000796">
    <property type="component" value="Chromosome"/>
</dbReference>
<dbReference type="GO" id="GO:0022625">
    <property type="term" value="C:cytosolic large ribosomal subunit"/>
    <property type="evidence" value="ECO:0007669"/>
    <property type="project" value="TreeGrafter"/>
</dbReference>
<dbReference type="GO" id="GO:0003735">
    <property type="term" value="F:structural constituent of ribosome"/>
    <property type="evidence" value="ECO:0007669"/>
    <property type="project" value="InterPro"/>
</dbReference>
<dbReference type="GO" id="GO:0006412">
    <property type="term" value="P:translation"/>
    <property type="evidence" value="ECO:0007669"/>
    <property type="project" value="UniProtKB-UniRule"/>
</dbReference>
<dbReference type="FunFam" id="3.90.1030.10:FF:000001">
    <property type="entry name" value="50S ribosomal protein L17"/>
    <property type="match status" value="1"/>
</dbReference>
<dbReference type="Gene3D" id="3.90.1030.10">
    <property type="entry name" value="Ribosomal protein L17"/>
    <property type="match status" value="1"/>
</dbReference>
<dbReference type="HAMAP" id="MF_01368">
    <property type="entry name" value="Ribosomal_bL17"/>
    <property type="match status" value="1"/>
</dbReference>
<dbReference type="InterPro" id="IPR000456">
    <property type="entry name" value="Ribosomal_bL17"/>
</dbReference>
<dbReference type="InterPro" id="IPR047859">
    <property type="entry name" value="Ribosomal_bL17_CS"/>
</dbReference>
<dbReference type="InterPro" id="IPR036373">
    <property type="entry name" value="Ribosomal_bL17_sf"/>
</dbReference>
<dbReference type="NCBIfam" id="TIGR00059">
    <property type="entry name" value="L17"/>
    <property type="match status" value="1"/>
</dbReference>
<dbReference type="PANTHER" id="PTHR14413:SF16">
    <property type="entry name" value="LARGE RIBOSOMAL SUBUNIT PROTEIN BL17M"/>
    <property type="match status" value="1"/>
</dbReference>
<dbReference type="PANTHER" id="PTHR14413">
    <property type="entry name" value="RIBOSOMAL PROTEIN L17"/>
    <property type="match status" value="1"/>
</dbReference>
<dbReference type="Pfam" id="PF01196">
    <property type="entry name" value="Ribosomal_L17"/>
    <property type="match status" value="1"/>
</dbReference>
<dbReference type="SUPFAM" id="SSF64263">
    <property type="entry name" value="Prokaryotic ribosomal protein L17"/>
    <property type="match status" value="1"/>
</dbReference>
<dbReference type="PROSITE" id="PS01167">
    <property type="entry name" value="RIBOSOMAL_L17"/>
    <property type="match status" value="1"/>
</dbReference>
<evidence type="ECO:0000255" key="1">
    <source>
        <dbReference type="HAMAP-Rule" id="MF_01368"/>
    </source>
</evidence>
<evidence type="ECO:0000305" key="2"/>
<sequence length="136" mass="15475">MRHKIKGRKLNVTSSHRQAMLANMAVALVTHEQIKTTLPKAKELRPYIETLITKAKKADLMVRRSVLSKIKDKTAVEKLINILGTRYKDRPGGYTRIIKAGFRYGDLAPIAYIEFVDRDINAKGNIQQDANEEIKN</sequence>
<reference key="1">
    <citation type="journal article" date="2008" name="Infect. Immun.">
        <title>Genomic comparison of virulent Rickettsia rickettsii Sheila Smith and avirulent Rickettsia rickettsii Iowa.</title>
        <authorList>
            <person name="Ellison D.W."/>
            <person name="Clark T.R."/>
            <person name="Sturdevant D.E."/>
            <person name="Virtaneva K."/>
            <person name="Porcella S.F."/>
            <person name="Hackstadt T."/>
        </authorList>
    </citation>
    <scope>NUCLEOTIDE SEQUENCE [LARGE SCALE GENOMIC DNA]</scope>
    <source>
        <strain>Iowa</strain>
    </source>
</reference>
<protein>
    <recommendedName>
        <fullName evidence="1">Large ribosomal subunit protein bL17</fullName>
    </recommendedName>
    <alternativeName>
        <fullName evidence="2">50S ribosomal protein L17</fullName>
    </alternativeName>
</protein>
<organism>
    <name type="scientific">Rickettsia rickettsii (strain Iowa)</name>
    <dbReference type="NCBI Taxonomy" id="452659"/>
    <lineage>
        <taxon>Bacteria</taxon>
        <taxon>Pseudomonadati</taxon>
        <taxon>Pseudomonadota</taxon>
        <taxon>Alphaproteobacteria</taxon>
        <taxon>Rickettsiales</taxon>
        <taxon>Rickettsiaceae</taxon>
        <taxon>Rickettsieae</taxon>
        <taxon>Rickettsia</taxon>
        <taxon>spotted fever group</taxon>
    </lineage>
</organism>
<name>RL17_RICRO</name>
<proteinExistence type="inferred from homology"/>